<keyword id="KW-1185">Reference proteome</keyword>
<keyword id="KW-0732">Signal</keyword>
<sequence>MKNRLLILSLLVSVPAFAWQPQTGDIIFQISRSSQSKAIQLATHTDYSHTGMLVIRNKKPYVFEAVGPVKYTPLKQWIAHGEKGKYVVRRVEGGLSVEQQQKLAQTAKRYLGKPYDFSFSWSDDRQYCSEVVWKVYQNALGMRVGEQQKLKEFDLSSPQVQAKLKERYGKNIPLEETVVSPQAVFDAPQLTTVAKEWPLFSW</sequence>
<protein>
    <recommendedName>
        <fullName>Uncharacterized protein YiiX</fullName>
    </recommendedName>
</protein>
<feature type="signal peptide" evidence="1">
    <location>
        <begin position="1"/>
        <end position="18"/>
    </location>
</feature>
<feature type="chain" id="PRO_0000013935" description="Uncharacterized protein YiiX">
    <location>
        <begin position="19"/>
        <end position="202"/>
    </location>
</feature>
<feature type="sequence conflict" description="In Ref. 4; AAA66217." evidence="2" ref="4">
    <original>T</original>
    <variation>S</variation>
    <location>
        <position position="45"/>
    </location>
</feature>
<feature type="sequence conflict" description="In Ref. 4; AAA66217." evidence="2" ref="4">
    <original>I</original>
    <variation>M</variation>
    <location>
        <position position="55"/>
    </location>
</feature>
<feature type="sequence conflict" description="In Ref. 4; AAA66217." evidence="2" ref="4">
    <original>E</original>
    <variation>K</variation>
    <location>
        <position position="98"/>
    </location>
</feature>
<gene>
    <name type="primary">yiiX</name>
    <name type="ordered locus">b3937</name>
    <name type="ordered locus">JW3908</name>
</gene>
<evidence type="ECO:0000255" key="1"/>
<evidence type="ECO:0000305" key="2"/>
<proteinExistence type="inferred from homology"/>
<reference key="1">
    <citation type="journal article" date="1993" name="Nucleic Acids Res.">
        <title>Analysis of the Escherichia coli genome. III. DNA sequence of the region from 87.2 to 89.2 minutes.</title>
        <authorList>
            <person name="Plunkett G. III"/>
            <person name="Burland V."/>
            <person name="Daniels D.L."/>
            <person name="Blattner F.R."/>
        </authorList>
    </citation>
    <scope>NUCLEOTIDE SEQUENCE [LARGE SCALE GENOMIC DNA]</scope>
    <source>
        <strain>K12 / MG1655 / ATCC 47076</strain>
    </source>
</reference>
<reference key="2">
    <citation type="journal article" date="1997" name="Science">
        <title>The complete genome sequence of Escherichia coli K-12.</title>
        <authorList>
            <person name="Blattner F.R."/>
            <person name="Plunkett G. III"/>
            <person name="Bloch C.A."/>
            <person name="Perna N.T."/>
            <person name="Burland V."/>
            <person name="Riley M."/>
            <person name="Collado-Vides J."/>
            <person name="Glasner J.D."/>
            <person name="Rode C.K."/>
            <person name="Mayhew G.F."/>
            <person name="Gregor J."/>
            <person name="Davis N.W."/>
            <person name="Kirkpatrick H.A."/>
            <person name="Goeden M.A."/>
            <person name="Rose D.J."/>
            <person name="Mau B."/>
            <person name="Shao Y."/>
        </authorList>
    </citation>
    <scope>NUCLEOTIDE SEQUENCE [LARGE SCALE GENOMIC DNA]</scope>
    <source>
        <strain>K12 / MG1655 / ATCC 47076</strain>
    </source>
</reference>
<reference key="3">
    <citation type="journal article" date="2006" name="Mol. Syst. Biol.">
        <title>Highly accurate genome sequences of Escherichia coli K-12 strains MG1655 and W3110.</title>
        <authorList>
            <person name="Hayashi K."/>
            <person name="Morooka N."/>
            <person name="Yamamoto Y."/>
            <person name="Fujita K."/>
            <person name="Isono K."/>
            <person name="Choi S."/>
            <person name="Ohtsubo E."/>
            <person name="Baba T."/>
            <person name="Wanner B.L."/>
            <person name="Mori H."/>
            <person name="Horiuchi T."/>
        </authorList>
    </citation>
    <scope>NUCLEOTIDE SEQUENCE [LARGE SCALE GENOMIC DNA]</scope>
    <source>
        <strain>K12 / W3110 / ATCC 27325 / DSM 5911</strain>
    </source>
</reference>
<reference key="4">
    <citation type="journal article" date="1995" name="J. Bacteriol.">
        <title>Reshuffling of Rhs components to create a new element.</title>
        <authorList>
            <person name="Zhao S."/>
            <person name="Hill C.W."/>
        </authorList>
    </citation>
    <scope>NUCLEOTIDE SEQUENCE [GENOMIC DNA] OF 30-202</scope>
    <source>
        <strain>O2:HN / ECOR-50 / P97 / UPEC</strain>
    </source>
</reference>
<accession>P32167</accession>
<accession>Q2M8N3</accession>
<accession>Q47288</accession>
<name>YIIX_ECOLI</name>
<organism>
    <name type="scientific">Escherichia coli (strain K12)</name>
    <dbReference type="NCBI Taxonomy" id="83333"/>
    <lineage>
        <taxon>Bacteria</taxon>
        <taxon>Pseudomonadati</taxon>
        <taxon>Pseudomonadota</taxon>
        <taxon>Gammaproteobacteria</taxon>
        <taxon>Enterobacterales</taxon>
        <taxon>Enterobacteriaceae</taxon>
        <taxon>Escherichia</taxon>
    </lineage>
</organism>
<dbReference type="EMBL" id="L19201">
    <property type="protein sequence ID" value="AAB03069.1"/>
    <property type="molecule type" value="Genomic_DNA"/>
</dbReference>
<dbReference type="EMBL" id="U00096">
    <property type="protein sequence ID" value="AAC76919.1"/>
    <property type="molecule type" value="Genomic_DNA"/>
</dbReference>
<dbReference type="EMBL" id="AP009048">
    <property type="protein sequence ID" value="BAE77373.1"/>
    <property type="molecule type" value="Genomic_DNA"/>
</dbReference>
<dbReference type="EMBL" id="AH003093">
    <property type="protein sequence ID" value="AAA66217.1"/>
    <property type="molecule type" value="Genomic_DNA"/>
</dbReference>
<dbReference type="PIR" id="S40880">
    <property type="entry name" value="S40880"/>
</dbReference>
<dbReference type="RefSeq" id="NP_418372.1">
    <property type="nucleotide sequence ID" value="NC_000913.3"/>
</dbReference>
<dbReference type="RefSeq" id="WP_000797353.1">
    <property type="nucleotide sequence ID" value="NZ_SSZK01000014.1"/>
</dbReference>
<dbReference type="SMR" id="P32167"/>
<dbReference type="BioGRID" id="4261105">
    <property type="interactions" value="104"/>
</dbReference>
<dbReference type="FunCoup" id="P32167">
    <property type="interactions" value="9"/>
</dbReference>
<dbReference type="IntAct" id="P32167">
    <property type="interactions" value="2"/>
</dbReference>
<dbReference type="STRING" id="511145.b3937"/>
<dbReference type="PaxDb" id="511145-b3937"/>
<dbReference type="EnsemblBacteria" id="AAC76919">
    <property type="protein sequence ID" value="AAC76919"/>
    <property type="gene ID" value="b3937"/>
</dbReference>
<dbReference type="GeneID" id="948436"/>
<dbReference type="KEGG" id="ecj:JW3908"/>
<dbReference type="KEGG" id="eco:b3937"/>
<dbReference type="KEGG" id="ecoc:C3026_21275"/>
<dbReference type="PATRIC" id="fig|1411691.4.peg.2768"/>
<dbReference type="EchoBASE" id="EB1828"/>
<dbReference type="eggNOG" id="COG3863">
    <property type="taxonomic scope" value="Bacteria"/>
</dbReference>
<dbReference type="HOGENOM" id="CLU_104117_0_0_6"/>
<dbReference type="InParanoid" id="P32167"/>
<dbReference type="OMA" id="CSELIWK"/>
<dbReference type="OrthoDB" id="195541at2"/>
<dbReference type="PhylomeDB" id="P32167"/>
<dbReference type="BioCyc" id="EcoCyc:EG11882-MONOMER"/>
<dbReference type="PRO" id="PR:P32167"/>
<dbReference type="Proteomes" id="UP000000625">
    <property type="component" value="Chromosome"/>
</dbReference>
<dbReference type="Gene3D" id="3.90.1720.10">
    <property type="entry name" value="endopeptidase domain like (from Nostoc punctiforme)"/>
    <property type="match status" value="1"/>
</dbReference>
<dbReference type="InterPro" id="IPR038765">
    <property type="entry name" value="Papain-like_cys_pep_sf"/>
</dbReference>
<dbReference type="InterPro" id="IPR024453">
    <property type="entry name" value="Peptidase_C92"/>
</dbReference>
<dbReference type="NCBIfam" id="NF007458">
    <property type="entry name" value="PRK10030.1"/>
    <property type="match status" value="1"/>
</dbReference>
<dbReference type="Pfam" id="PF05708">
    <property type="entry name" value="Peptidase_C92"/>
    <property type="match status" value="1"/>
</dbReference>
<dbReference type="SUPFAM" id="SSF54001">
    <property type="entry name" value="Cysteine proteinases"/>
    <property type="match status" value="1"/>
</dbReference>
<comment type="similarity">
    <text evidence="2">To E.coli YebB.</text>
</comment>